<protein>
    <recommendedName>
        <fullName evidence="1">NAD-capped RNA hydrolase NudC</fullName>
        <shortName evidence="1">DeNADding enzyme NudC</shortName>
        <ecNumber evidence="1">3.6.1.-</ecNumber>
    </recommendedName>
    <alternativeName>
        <fullName evidence="1">NADH pyrophosphatase</fullName>
        <ecNumber evidence="1">3.6.1.22</ecNumber>
    </alternativeName>
</protein>
<reference key="1">
    <citation type="journal article" date="2010" name="PLoS Genet.">
        <title>Genome sequence of the plant growth promoting endophytic bacterium Enterobacter sp. 638.</title>
        <authorList>
            <person name="Taghavi S."/>
            <person name="van der Lelie D."/>
            <person name="Hoffman A."/>
            <person name="Zhang Y.B."/>
            <person name="Walla M.D."/>
            <person name="Vangronsveld J."/>
            <person name="Newman L."/>
            <person name="Monchy S."/>
        </authorList>
    </citation>
    <scope>NUCLEOTIDE SEQUENCE [LARGE SCALE GENOMIC DNA]</scope>
    <source>
        <strain>638</strain>
    </source>
</reference>
<proteinExistence type="inferred from homology"/>
<dbReference type="EC" id="3.6.1.-" evidence="1"/>
<dbReference type="EC" id="3.6.1.22" evidence="1"/>
<dbReference type="EMBL" id="CP000653">
    <property type="protein sequence ID" value="ABP58899.1"/>
    <property type="molecule type" value="Genomic_DNA"/>
</dbReference>
<dbReference type="RefSeq" id="WP_011915473.1">
    <property type="nucleotide sequence ID" value="NC_009436.1"/>
</dbReference>
<dbReference type="SMR" id="A4W5B9"/>
<dbReference type="STRING" id="399742.Ent638_0209"/>
<dbReference type="KEGG" id="ent:Ent638_0209"/>
<dbReference type="eggNOG" id="COG2816">
    <property type="taxonomic scope" value="Bacteria"/>
</dbReference>
<dbReference type="HOGENOM" id="CLU_037162_0_1_6"/>
<dbReference type="OrthoDB" id="9791656at2"/>
<dbReference type="Proteomes" id="UP000000230">
    <property type="component" value="Chromosome"/>
</dbReference>
<dbReference type="GO" id="GO:0005829">
    <property type="term" value="C:cytosol"/>
    <property type="evidence" value="ECO:0007669"/>
    <property type="project" value="TreeGrafter"/>
</dbReference>
<dbReference type="GO" id="GO:0000287">
    <property type="term" value="F:magnesium ion binding"/>
    <property type="evidence" value="ECO:0007669"/>
    <property type="project" value="UniProtKB-UniRule"/>
</dbReference>
<dbReference type="GO" id="GO:0030145">
    <property type="term" value="F:manganese ion binding"/>
    <property type="evidence" value="ECO:0007669"/>
    <property type="project" value="UniProtKB-UniRule"/>
</dbReference>
<dbReference type="GO" id="GO:0000210">
    <property type="term" value="F:NAD+ diphosphatase activity"/>
    <property type="evidence" value="ECO:0007669"/>
    <property type="project" value="UniProtKB-UniRule"/>
</dbReference>
<dbReference type="GO" id="GO:0035529">
    <property type="term" value="F:NADH pyrophosphatase activity"/>
    <property type="evidence" value="ECO:0007669"/>
    <property type="project" value="TreeGrafter"/>
</dbReference>
<dbReference type="GO" id="GO:0110153">
    <property type="term" value="F:RNA NAD-cap (NMN-forming) hydrolase activity"/>
    <property type="evidence" value="ECO:0007669"/>
    <property type="project" value="RHEA"/>
</dbReference>
<dbReference type="GO" id="GO:0008270">
    <property type="term" value="F:zinc ion binding"/>
    <property type="evidence" value="ECO:0007669"/>
    <property type="project" value="UniProtKB-UniRule"/>
</dbReference>
<dbReference type="GO" id="GO:0019677">
    <property type="term" value="P:NAD catabolic process"/>
    <property type="evidence" value="ECO:0007669"/>
    <property type="project" value="TreeGrafter"/>
</dbReference>
<dbReference type="GO" id="GO:0006734">
    <property type="term" value="P:NADH metabolic process"/>
    <property type="evidence" value="ECO:0007669"/>
    <property type="project" value="TreeGrafter"/>
</dbReference>
<dbReference type="GO" id="GO:0006742">
    <property type="term" value="P:NADP catabolic process"/>
    <property type="evidence" value="ECO:0007669"/>
    <property type="project" value="TreeGrafter"/>
</dbReference>
<dbReference type="CDD" id="cd03429">
    <property type="entry name" value="NUDIX_NADH_pyrophosphatase_Nudt13"/>
    <property type="match status" value="1"/>
</dbReference>
<dbReference type="FunFam" id="3.90.79.10:FF:000004">
    <property type="entry name" value="NADH pyrophosphatase"/>
    <property type="match status" value="1"/>
</dbReference>
<dbReference type="FunFam" id="3.90.79.20:FF:000001">
    <property type="entry name" value="NADH pyrophosphatase"/>
    <property type="match status" value="1"/>
</dbReference>
<dbReference type="Gene3D" id="3.90.79.20">
    <property type="match status" value="1"/>
</dbReference>
<dbReference type="Gene3D" id="3.90.79.10">
    <property type="entry name" value="Nucleoside Triphosphate Pyrophosphohydrolase"/>
    <property type="match status" value="1"/>
</dbReference>
<dbReference type="HAMAP" id="MF_00297">
    <property type="entry name" value="Nudix_NudC"/>
    <property type="match status" value="1"/>
</dbReference>
<dbReference type="InterPro" id="IPR050241">
    <property type="entry name" value="NAD-cap_RNA_hydrolase_NudC"/>
</dbReference>
<dbReference type="InterPro" id="IPR049734">
    <property type="entry name" value="NudC-like_C"/>
</dbReference>
<dbReference type="InterPro" id="IPR015797">
    <property type="entry name" value="NUDIX_hydrolase-like_dom_sf"/>
</dbReference>
<dbReference type="InterPro" id="IPR020084">
    <property type="entry name" value="NUDIX_hydrolase_CS"/>
</dbReference>
<dbReference type="InterPro" id="IPR000086">
    <property type="entry name" value="NUDIX_hydrolase_dom"/>
</dbReference>
<dbReference type="InterPro" id="IPR022925">
    <property type="entry name" value="RNA_Hydrolase_NudC"/>
</dbReference>
<dbReference type="InterPro" id="IPR015376">
    <property type="entry name" value="Znr_NADH_PPase"/>
</dbReference>
<dbReference type="NCBIfam" id="NF001299">
    <property type="entry name" value="PRK00241.1"/>
    <property type="match status" value="1"/>
</dbReference>
<dbReference type="PANTHER" id="PTHR42904:SF6">
    <property type="entry name" value="NAD-CAPPED RNA HYDROLASE NUDT12"/>
    <property type="match status" value="1"/>
</dbReference>
<dbReference type="PANTHER" id="PTHR42904">
    <property type="entry name" value="NUDIX HYDROLASE, NUDC SUBFAMILY"/>
    <property type="match status" value="1"/>
</dbReference>
<dbReference type="Pfam" id="PF00293">
    <property type="entry name" value="NUDIX"/>
    <property type="match status" value="1"/>
</dbReference>
<dbReference type="Pfam" id="PF09297">
    <property type="entry name" value="Zn_ribbon_NUD"/>
    <property type="match status" value="1"/>
</dbReference>
<dbReference type="SUPFAM" id="SSF55811">
    <property type="entry name" value="Nudix"/>
    <property type="match status" value="2"/>
</dbReference>
<dbReference type="PROSITE" id="PS51462">
    <property type="entry name" value="NUDIX"/>
    <property type="match status" value="1"/>
</dbReference>
<dbReference type="PROSITE" id="PS00893">
    <property type="entry name" value="NUDIX_BOX"/>
    <property type="match status" value="1"/>
</dbReference>
<sequence length="258" mass="29577">MDRIIEKLDRGWWIVSHEQKLWLPAGELPHGDAEQFDLVGQPALKIGEWQGDAVWLIQQNRRQDMGSVRQVMDLDAGLFQLAGRGVQLAEFYRSHKFCGYCGHAMHPSKTEWALLCSHCRERYYPQIAPCIIVAIRRDDSILLAQHVRHRNGIHTVLAGFVEVGETLEQTVAREVMEESGIKVKNLRYVTSQPWPFPMSLMTAFMADYDSGDIVIDPKELLEANWYRYDDLPLLPPPGTVARRLIEDTVAMCRADYEV</sequence>
<organism>
    <name type="scientific">Enterobacter sp. (strain 638)</name>
    <dbReference type="NCBI Taxonomy" id="399742"/>
    <lineage>
        <taxon>Bacteria</taxon>
        <taxon>Pseudomonadati</taxon>
        <taxon>Pseudomonadota</taxon>
        <taxon>Gammaproteobacteria</taxon>
        <taxon>Enterobacterales</taxon>
        <taxon>Enterobacteriaceae</taxon>
        <taxon>Enterobacter</taxon>
    </lineage>
</organism>
<name>NUDC_ENT38</name>
<comment type="function">
    <text evidence="1">mRNA decapping enzyme that specifically removes the nicotinamide adenine dinucleotide (NAD) cap from a subset of mRNAs by hydrolyzing the diphosphate linkage to produce nicotinamide mononucleotide (NMN) and 5' monophosphate mRNA. The NAD-cap is present at the 5'-end of some mRNAs and stabilizes RNA against 5'-processing. Has preference for mRNAs with a 5'-end purine. Catalyzes the hydrolysis of a broad range of dinucleotide pyrophosphates.</text>
</comment>
<comment type="catalytic activity">
    <reaction evidence="1">
        <text>a 5'-end NAD(+)-phospho-ribonucleoside in mRNA + H2O = a 5'-end phospho-adenosine-phospho-ribonucleoside in mRNA + beta-nicotinamide D-ribonucleotide + 2 H(+)</text>
        <dbReference type="Rhea" id="RHEA:60876"/>
        <dbReference type="Rhea" id="RHEA-COMP:15698"/>
        <dbReference type="Rhea" id="RHEA-COMP:15719"/>
        <dbReference type="ChEBI" id="CHEBI:14649"/>
        <dbReference type="ChEBI" id="CHEBI:15377"/>
        <dbReference type="ChEBI" id="CHEBI:15378"/>
        <dbReference type="ChEBI" id="CHEBI:144029"/>
        <dbReference type="ChEBI" id="CHEBI:144051"/>
    </reaction>
    <physiologicalReaction direction="left-to-right" evidence="1">
        <dbReference type="Rhea" id="RHEA:60877"/>
    </physiologicalReaction>
</comment>
<comment type="catalytic activity">
    <reaction evidence="1">
        <text>NAD(+) + H2O = beta-nicotinamide D-ribonucleotide + AMP + 2 H(+)</text>
        <dbReference type="Rhea" id="RHEA:11800"/>
        <dbReference type="ChEBI" id="CHEBI:14649"/>
        <dbReference type="ChEBI" id="CHEBI:15377"/>
        <dbReference type="ChEBI" id="CHEBI:15378"/>
        <dbReference type="ChEBI" id="CHEBI:57540"/>
        <dbReference type="ChEBI" id="CHEBI:456215"/>
        <dbReference type="EC" id="3.6.1.22"/>
    </reaction>
</comment>
<comment type="catalytic activity">
    <reaction evidence="1">
        <text>NADH + H2O = reduced beta-nicotinamide D-ribonucleotide + AMP + 2 H(+)</text>
        <dbReference type="Rhea" id="RHEA:48868"/>
        <dbReference type="ChEBI" id="CHEBI:15377"/>
        <dbReference type="ChEBI" id="CHEBI:15378"/>
        <dbReference type="ChEBI" id="CHEBI:57945"/>
        <dbReference type="ChEBI" id="CHEBI:90832"/>
        <dbReference type="ChEBI" id="CHEBI:456215"/>
        <dbReference type="EC" id="3.6.1.22"/>
    </reaction>
</comment>
<comment type="cofactor">
    <cofactor evidence="1">
        <name>Mg(2+)</name>
        <dbReference type="ChEBI" id="CHEBI:18420"/>
    </cofactor>
    <cofactor evidence="1">
        <name>Mn(2+)</name>
        <dbReference type="ChEBI" id="CHEBI:29035"/>
    </cofactor>
    <text evidence="1">Divalent metal cations. Mg(2+) or Mn(2+).</text>
</comment>
<comment type="cofactor">
    <cofactor evidence="1">
        <name>Zn(2+)</name>
        <dbReference type="ChEBI" id="CHEBI:29105"/>
    </cofactor>
    <text evidence="1">Binds 1 zinc ion per subunit.</text>
</comment>
<comment type="subunit">
    <text evidence="1">Homodimer.</text>
</comment>
<comment type="similarity">
    <text evidence="1">Belongs to the Nudix hydrolase family. NudC subfamily.</text>
</comment>
<accession>A4W5B9</accession>
<evidence type="ECO:0000255" key="1">
    <source>
        <dbReference type="HAMAP-Rule" id="MF_00297"/>
    </source>
</evidence>
<keyword id="KW-0378">Hydrolase</keyword>
<keyword id="KW-0460">Magnesium</keyword>
<keyword id="KW-0464">Manganese</keyword>
<keyword id="KW-0479">Metal-binding</keyword>
<keyword id="KW-0520">NAD</keyword>
<keyword id="KW-0862">Zinc</keyword>
<feature type="chain" id="PRO_1000059297" description="NAD-capped RNA hydrolase NudC">
    <location>
        <begin position="1"/>
        <end position="258"/>
    </location>
</feature>
<feature type="domain" description="Nudix hydrolase" evidence="1">
    <location>
        <begin position="125"/>
        <end position="248"/>
    </location>
</feature>
<feature type="short sequence motif" description="Nudix box" evidence="1">
    <location>
        <begin position="159"/>
        <end position="180"/>
    </location>
</feature>
<feature type="binding site" evidence="1">
    <location>
        <position position="69"/>
    </location>
    <ligand>
        <name>substrate</name>
    </ligand>
</feature>
<feature type="binding site" evidence="1">
    <location>
        <position position="98"/>
    </location>
    <ligand>
        <name>Zn(2+)</name>
        <dbReference type="ChEBI" id="CHEBI:29105"/>
    </ligand>
</feature>
<feature type="binding site" evidence="1">
    <location>
        <position position="101"/>
    </location>
    <ligand>
        <name>Zn(2+)</name>
        <dbReference type="ChEBI" id="CHEBI:29105"/>
    </ligand>
</feature>
<feature type="binding site" evidence="1">
    <location>
        <position position="111"/>
    </location>
    <ligand>
        <name>substrate</name>
    </ligand>
</feature>
<feature type="binding site" evidence="1">
    <location>
        <position position="116"/>
    </location>
    <ligand>
        <name>Zn(2+)</name>
        <dbReference type="ChEBI" id="CHEBI:29105"/>
    </ligand>
</feature>
<feature type="binding site" evidence="1">
    <location>
        <position position="119"/>
    </location>
    <ligand>
        <name>Zn(2+)</name>
        <dbReference type="ChEBI" id="CHEBI:29105"/>
    </ligand>
</feature>
<feature type="binding site" evidence="1">
    <location>
        <position position="124"/>
    </location>
    <ligand>
        <name>substrate</name>
    </ligand>
</feature>
<feature type="binding site" evidence="1">
    <location>
        <position position="158"/>
    </location>
    <ligand>
        <name>a divalent metal cation</name>
        <dbReference type="ChEBI" id="CHEBI:60240"/>
        <label>1</label>
    </ligand>
</feature>
<feature type="binding site" evidence="1">
    <location>
        <position position="174"/>
    </location>
    <ligand>
        <name>a divalent metal cation</name>
        <dbReference type="ChEBI" id="CHEBI:60240"/>
        <label>2</label>
    </ligand>
</feature>
<feature type="binding site" evidence="1">
    <location>
        <position position="174"/>
    </location>
    <ligand>
        <name>a divalent metal cation</name>
        <dbReference type="ChEBI" id="CHEBI:60240"/>
        <label>3</label>
    </ligand>
</feature>
<feature type="binding site" evidence="1">
    <location>
        <position position="178"/>
    </location>
    <ligand>
        <name>a divalent metal cation</name>
        <dbReference type="ChEBI" id="CHEBI:60240"/>
        <label>1</label>
    </ligand>
</feature>
<feature type="binding site" evidence="1">
    <location>
        <position position="178"/>
    </location>
    <ligand>
        <name>a divalent metal cation</name>
        <dbReference type="ChEBI" id="CHEBI:60240"/>
        <label>3</label>
    </ligand>
</feature>
<feature type="binding site" evidence="1">
    <location>
        <begin position="192"/>
        <end position="199"/>
    </location>
    <ligand>
        <name>substrate</name>
    </ligand>
</feature>
<feature type="binding site" evidence="1">
    <location>
        <position position="219"/>
    </location>
    <ligand>
        <name>a divalent metal cation</name>
        <dbReference type="ChEBI" id="CHEBI:60240"/>
        <label>1</label>
    </ligand>
</feature>
<feature type="binding site" evidence="1">
    <location>
        <position position="219"/>
    </location>
    <ligand>
        <name>a divalent metal cation</name>
        <dbReference type="ChEBI" id="CHEBI:60240"/>
        <label>3</label>
    </ligand>
</feature>
<feature type="binding site" evidence="1">
    <location>
        <position position="241"/>
    </location>
    <ligand>
        <name>substrate</name>
    </ligand>
</feature>
<gene>
    <name evidence="1" type="primary">nudC</name>
    <name type="ordered locus">Ent638_0209</name>
</gene>